<keyword id="KW-1015">Disulfide bond</keyword>
<keyword id="KW-0964">Secreted</keyword>
<keyword id="KW-0732">Signal</keyword>
<keyword id="KW-0800">Toxin</keyword>
<sequence length="81" mass="9239">MKTLLLSLVVMTIVYLDLGYTLKCHESENLDDHVVCEEDETMCYKFTFVPFRDFEIVARGCSASCPEEKDVVCCSTDLCNK</sequence>
<evidence type="ECO:0000250" key="1"/>
<evidence type="ECO:0000250" key="2">
    <source>
        <dbReference type="UniProtKB" id="P60301"/>
    </source>
</evidence>
<evidence type="ECO:0000255" key="3"/>
<evidence type="ECO:0000305" key="4"/>
<evidence type="ECO:0000312" key="5">
    <source>
        <dbReference type="EMBL" id="ABU68554.1"/>
    </source>
</evidence>
<organism>
    <name type="scientific">Oxyuranus microlepidotus</name>
    <name type="common">Inland taipan</name>
    <name type="synonym">Diemenia microlepidota</name>
    <dbReference type="NCBI Taxonomy" id="111177"/>
    <lineage>
        <taxon>Eukaryota</taxon>
        <taxon>Metazoa</taxon>
        <taxon>Chordata</taxon>
        <taxon>Craniata</taxon>
        <taxon>Vertebrata</taxon>
        <taxon>Euteleostomi</taxon>
        <taxon>Lepidosauria</taxon>
        <taxon>Squamata</taxon>
        <taxon>Bifurcata</taxon>
        <taxon>Unidentata</taxon>
        <taxon>Episquamata</taxon>
        <taxon>Toxicofera</taxon>
        <taxon>Serpentes</taxon>
        <taxon>Colubroidea</taxon>
        <taxon>Elapidae</taxon>
        <taxon>Hydrophiinae</taxon>
        <taxon>Oxyuranus</taxon>
    </lineage>
</organism>
<reference key="1">
    <citation type="journal article" date="2008" name="Mol. Cell. Proteomics">
        <title>Evolution of an arsenal: structural and functional diversification of the venom system in the advanced snakes (Caenophidia).</title>
        <authorList>
            <person name="Fry B.G."/>
            <person name="Scheib H."/>
            <person name="van der Weerd L."/>
            <person name="Young B."/>
            <person name="McNaughtan J."/>
            <person name="Ramjan S.F.R."/>
            <person name="Vidal N."/>
            <person name="Poelmann R.E."/>
            <person name="Norman J.A."/>
        </authorList>
    </citation>
    <scope>NUCLEOTIDE SEQUENCE [LARGE SCALE MRNA]</scope>
    <source>
        <tissue>Venom gland</tissue>
    </source>
</reference>
<name>3SX6_OXYMI</name>
<proteinExistence type="inferred from homology"/>
<feature type="signal peptide" evidence="3">
    <location>
        <begin position="1"/>
        <end position="21"/>
    </location>
</feature>
<feature type="chain" id="PRO_0000316178" description="Three-finger toxin 3FTx-Oxy6">
    <location>
        <begin position="22"/>
        <end position="81"/>
    </location>
</feature>
<feature type="disulfide bond" evidence="2">
    <location>
        <begin position="24"/>
        <end position="43"/>
    </location>
</feature>
<feature type="disulfide bond" evidence="2">
    <location>
        <begin position="36"/>
        <end position="61"/>
    </location>
</feature>
<feature type="disulfide bond" evidence="2">
    <location>
        <begin position="65"/>
        <end position="73"/>
    </location>
</feature>
<feature type="disulfide bond" evidence="2">
    <location>
        <begin position="74"/>
        <end position="79"/>
    </location>
</feature>
<comment type="subcellular location">
    <subcellularLocation>
        <location evidence="1">Secreted</location>
    </subcellularLocation>
</comment>
<comment type="tissue specificity">
    <text evidence="4">Expressed by the venom gland.</text>
</comment>
<comment type="similarity">
    <text evidence="4">Belongs to the three-finger toxin family. Short-chain subfamily.</text>
</comment>
<protein>
    <recommendedName>
        <fullName evidence="5">Three-finger toxin 3FTx-Oxy6</fullName>
    </recommendedName>
</protein>
<accession>A7X4T2</accession>
<dbReference type="EMBL" id="EU029754">
    <property type="protein sequence ID" value="ABU68554.1"/>
    <property type="molecule type" value="mRNA"/>
</dbReference>
<dbReference type="SMR" id="A7X4T2"/>
<dbReference type="GO" id="GO:0005576">
    <property type="term" value="C:extracellular region"/>
    <property type="evidence" value="ECO:0007669"/>
    <property type="project" value="UniProtKB-SubCell"/>
</dbReference>
<dbReference type="GO" id="GO:0090729">
    <property type="term" value="F:toxin activity"/>
    <property type="evidence" value="ECO:0007669"/>
    <property type="project" value="UniProtKB-KW"/>
</dbReference>
<dbReference type="CDD" id="cd00206">
    <property type="entry name" value="TFP_snake_toxin"/>
    <property type="match status" value="1"/>
</dbReference>
<dbReference type="Gene3D" id="2.10.60.10">
    <property type="entry name" value="CD59"/>
    <property type="match status" value="1"/>
</dbReference>
<dbReference type="InterPro" id="IPR003571">
    <property type="entry name" value="Snake_3FTx"/>
</dbReference>
<dbReference type="InterPro" id="IPR045860">
    <property type="entry name" value="Snake_toxin-like_sf"/>
</dbReference>
<dbReference type="InterPro" id="IPR054131">
    <property type="entry name" value="Toxin_cobra-type"/>
</dbReference>
<dbReference type="Pfam" id="PF21947">
    <property type="entry name" value="Toxin_cobra-type"/>
    <property type="match status" value="1"/>
</dbReference>
<dbReference type="SUPFAM" id="SSF57302">
    <property type="entry name" value="Snake toxin-like"/>
    <property type="match status" value="1"/>
</dbReference>